<name>INT10_CHICK</name>
<reference key="1">
    <citation type="journal article" date="2005" name="Genome Biol.">
        <title>Full-length cDNAs from chicken bursal lymphocytes to facilitate gene function analysis.</title>
        <authorList>
            <person name="Caldwell R.B."/>
            <person name="Kierzek A.M."/>
            <person name="Arakawa H."/>
            <person name="Bezzubov Y."/>
            <person name="Zaim J."/>
            <person name="Fiedler P."/>
            <person name="Kutter S."/>
            <person name="Blagodatski A."/>
            <person name="Kostovska D."/>
            <person name="Koter M."/>
            <person name="Plachy J."/>
            <person name="Carninci P."/>
            <person name="Hayashizaki Y."/>
            <person name="Buerstedde J.-M."/>
        </authorList>
    </citation>
    <scope>NUCLEOTIDE SEQUENCE [LARGE SCALE MRNA]</scope>
    <source>
        <strain>CB</strain>
        <tissue>Bursa of Fabricius</tissue>
    </source>
</reference>
<accession>Q5ZLS8</accession>
<gene>
    <name type="primary">INTS10</name>
    <name type="ORF">RCJMB04_4p16</name>
</gene>
<protein>
    <recommendedName>
        <fullName>Integrator complex subunit 10</fullName>
        <shortName>Int10</shortName>
    </recommendedName>
</protein>
<keyword id="KW-0539">Nucleus</keyword>
<keyword id="KW-1185">Reference proteome</keyword>
<comment type="function">
    <text evidence="1">Component of the integrator complex, a multiprotein complex that terminates RNA polymerase II (Pol II) transcription in the promoter-proximal region of genes. The integrator complex provides a quality checkpoint during transcription elongation by driving premature transcription termination of transcripts that are unfavorably configured for transcriptional elongation: the complex terminates transcription by (1) catalyzing dephosphorylation of the C-terminal domain (CTD) of Pol II subunit POLR2A/RPB1 and SUPT5H/SPT5, (2) degrading the exiting nascent RNA transcript via endonuclease activity and (3) promoting the release of Pol II from bound DNA. The integrator complex is also involved in terminating the synthesis of non-coding Pol II transcripts, such as enhancer RNAs (eRNAs), small nuclear RNAs (snRNAs), telomerase RNAs and long non-coding RNAs (lncRNAs).</text>
</comment>
<comment type="subunit">
    <text evidence="1">Component of the Integrator complex, composed of core subunits INTS1, INTS2, INTS3, INTS4, INTS5, INTS6, INTS7, INTS8, INTS9/RC74, INTS10, INTS11/CPSF3L, INTS12, INTS13, INTS14 and INTS15. The core complex associates with protein phosphatase 2A subunits PPP2CA and PPP2R1A, to form the Integrator-PP2A (INTAC) complex. INTS10 is part of the tail subcomplex, composed of INTS10, INTS13, INTS14 and INTS15.</text>
</comment>
<comment type="subcellular location">
    <subcellularLocation>
        <location evidence="1">Nucleus</location>
    </subcellularLocation>
</comment>
<comment type="similarity">
    <text evidence="3">Belongs to the Integrator subunit 10 family.</text>
</comment>
<organism>
    <name type="scientific">Gallus gallus</name>
    <name type="common">Chicken</name>
    <dbReference type="NCBI Taxonomy" id="9031"/>
    <lineage>
        <taxon>Eukaryota</taxon>
        <taxon>Metazoa</taxon>
        <taxon>Chordata</taxon>
        <taxon>Craniata</taxon>
        <taxon>Vertebrata</taxon>
        <taxon>Euteleostomi</taxon>
        <taxon>Archelosauria</taxon>
        <taxon>Archosauria</taxon>
        <taxon>Dinosauria</taxon>
        <taxon>Saurischia</taxon>
        <taxon>Theropoda</taxon>
        <taxon>Coelurosauria</taxon>
        <taxon>Aves</taxon>
        <taxon>Neognathae</taxon>
        <taxon>Galloanserae</taxon>
        <taxon>Galliformes</taxon>
        <taxon>Phasianidae</taxon>
        <taxon>Phasianinae</taxon>
        <taxon>Gallus</taxon>
    </lineage>
</organism>
<evidence type="ECO:0000250" key="1">
    <source>
        <dbReference type="UniProtKB" id="Q9NVR2"/>
    </source>
</evidence>
<evidence type="ECO:0000256" key="2">
    <source>
        <dbReference type="SAM" id="MobiDB-lite"/>
    </source>
</evidence>
<evidence type="ECO:0000305" key="3"/>
<sequence length="710" mass="81832">MSAQGDCEFLVKRARELVPGDLWAAKAWLITARSLYPADFNIQYEMYTIERNAERTASAGRLLYDMFVNFPDQPAVWREISVITAALRNDSQDKQTQFLRGLFETLPGRVQCEMLLKATEQCFNTLERAEMLLLLLRRFPETVVQHGVGLGETLLEAENIEDQESPVNCFRKLFVCDVLPLIINNPDVRLPASLLYKYLNKAAEFYINYVTRSTQTESQYQGSQDSSDLMSPSKRSSQKYIIDGLTEKSSQITDPWERLFKILSVVGMRCEWQMDKGRRSFGDILHRMKDLCRYISNFDSDAHAKYKNQVVYSTMLVFFKNAFQYVSNIQPSLFQGPNAPNQAPLILLEDVTNVYGDTDIDRNKHIHKKRKLAEGREKTMSSDDEDPSGKARSRHIAVNKADLANSIEVLESFKLARESWELLCSLESLDKEFTRICLSWKTETWLWLRIFLTDMIIYQGQYKKAISSLHHLAALQGSHSPQQITGQGSLENQRALIQLATCHFALGEYRQTCEKVLDLMCYILLPIQEGGKVQEEQPKVKSKFRKGSDLKLWPCTSRAIMPYCLHLLLACFKLRAFTDNRDDTALGHVIVLLQHEWPRGENLFLKAINKICQQGNFQYENFFNYVTNIDMLEEFAYLRTQEGGKIHLELLPNQGMLIKHHTVTRGITKGVKEDFRLAMERQVSRCGENLMVVLHRFCINEKILLLQTLS</sequence>
<proteinExistence type="evidence at transcript level"/>
<dbReference type="EMBL" id="AJ719656">
    <property type="protein sequence ID" value="CAG31315.1"/>
    <property type="molecule type" value="mRNA"/>
</dbReference>
<dbReference type="RefSeq" id="NP_001034386.1">
    <property type="nucleotide sequence ID" value="NM_001039297.2"/>
</dbReference>
<dbReference type="SMR" id="Q5ZLS8"/>
<dbReference type="FunCoup" id="Q5ZLS8">
    <property type="interactions" value="3119"/>
</dbReference>
<dbReference type="STRING" id="9031.ENSGALP00000016456"/>
<dbReference type="GlyGen" id="Q5ZLS8">
    <property type="glycosylation" value="1 site"/>
</dbReference>
<dbReference type="PaxDb" id="9031-ENSGALP00000016456"/>
<dbReference type="GeneID" id="422489"/>
<dbReference type="KEGG" id="gga:422489"/>
<dbReference type="CTD" id="55174"/>
<dbReference type="VEuPathDB" id="HostDB:geneid_422489"/>
<dbReference type="eggNOG" id="ENOG502QQ28">
    <property type="taxonomic scope" value="Eukaryota"/>
</dbReference>
<dbReference type="HOGENOM" id="CLU_023740_0_0_1"/>
<dbReference type="InParanoid" id="Q5ZLS8"/>
<dbReference type="OrthoDB" id="18145at2759"/>
<dbReference type="PhylomeDB" id="Q5ZLS8"/>
<dbReference type="TreeFam" id="TF323935"/>
<dbReference type="PRO" id="PR:Q5ZLS8"/>
<dbReference type="Proteomes" id="UP000000539">
    <property type="component" value="Unassembled WGS sequence"/>
</dbReference>
<dbReference type="GO" id="GO:0160232">
    <property type="term" value="C:INTAC complex"/>
    <property type="evidence" value="ECO:0000250"/>
    <property type="project" value="UniProtKB"/>
</dbReference>
<dbReference type="GO" id="GO:0032039">
    <property type="term" value="C:integrator complex"/>
    <property type="evidence" value="ECO:0000318"/>
    <property type="project" value="GO_Central"/>
</dbReference>
<dbReference type="GO" id="GO:0160240">
    <property type="term" value="P:RNA polymerase II transcription initiation surveillance"/>
    <property type="evidence" value="ECO:0000250"/>
    <property type="project" value="UniProtKB"/>
</dbReference>
<dbReference type="GO" id="GO:0016180">
    <property type="term" value="P:snRNA processing"/>
    <property type="evidence" value="ECO:0000318"/>
    <property type="project" value="GO_Central"/>
</dbReference>
<dbReference type="InterPro" id="IPR026164">
    <property type="entry name" value="Int_cplx_su10"/>
</dbReference>
<dbReference type="PANTHER" id="PTHR16055">
    <property type="entry name" value="INTEGRATOR COMPLEX SUBUNIT 10"/>
    <property type="match status" value="1"/>
</dbReference>
<dbReference type="PANTHER" id="PTHR16055:SF2">
    <property type="entry name" value="INTEGRATOR COMPLEX SUBUNIT 10"/>
    <property type="match status" value="1"/>
</dbReference>
<dbReference type="Pfam" id="PF21045">
    <property type="entry name" value="INT10"/>
    <property type="match status" value="1"/>
</dbReference>
<dbReference type="PRINTS" id="PR02106">
    <property type="entry name" value="INTSUBUNIT10"/>
</dbReference>
<feature type="chain" id="PRO_0000235690" description="Integrator complex subunit 10">
    <location>
        <begin position="1"/>
        <end position="710"/>
    </location>
</feature>
<feature type="region of interest" description="Disordered" evidence="2">
    <location>
        <begin position="366"/>
        <end position="393"/>
    </location>
</feature>
<feature type="compositionally biased region" description="Basic and acidic residues" evidence="2">
    <location>
        <begin position="372"/>
        <end position="381"/>
    </location>
</feature>